<evidence type="ECO:0000255" key="1">
    <source>
        <dbReference type="HAMAP-Rule" id="MF_01039"/>
    </source>
</evidence>
<protein>
    <recommendedName>
        <fullName evidence="1">2,3-bisphosphoglycerate-dependent phosphoglycerate mutase</fullName>
        <shortName evidence="1">BPG-dependent PGAM</shortName>
        <shortName evidence="1">PGAM</shortName>
        <shortName evidence="1">Phosphoglyceromutase</shortName>
        <shortName evidence="1">dPGM</shortName>
        <ecNumber evidence="1">5.4.2.11</ecNumber>
    </recommendedName>
</protein>
<dbReference type="EC" id="5.4.2.11" evidence="1"/>
<dbReference type="EMBL" id="CU928163">
    <property type="protein sequence ID" value="CAR12048.1"/>
    <property type="molecule type" value="Genomic_DNA"/>
</dbReference>
<dbReference type="RefSeq" id="WP_001295305.1">
    <property type="nucleotide sequence ID" value="NC_011751.1"/>
</dbReference>
<dbReference type="RefSeq" id="YP_002411594.1">
    <property type="nucleotide sequence ID" value="NC_011751.1"/>
</dbReference>
<dbReference type="SMR" id="B7N9Z7"/>
<dbReference type="STRING" id="585056.ECUMN_0839"/>
<dbReference type="GeneID" id="93776726"/>
<dbReference type="KEGG" id="eum:ECUMN_0839"/>
<dbReference type="PATRIC" id="fig|585056.7.peg.1040"/>
<dbReference type="HOGENOM" id="CLU_033323_1_1_6"/>
<dbReference type="UniPathway" id="UPA00109">
    <property type="reaction ID" value="UER00186"/>
</dbReference>
<dbReference type="Proteomes" id="UP000007097">
    <property type="component" value="Chromosome"/>
</dbReference>
<dbReference type="GO" id="GO:0004619">
    <property type="term" value="F:phosphoglycerate mutase activity"/>
    <property type="evidence" value="ECO:0007669"/>
    <property type="project" value="UniProtKB-EC"/>
</dbReference>
<dbReference type="GO" id="GO:0006094">
    <property type="term" value="P:gluconeogenesis"/>
    <property type="evidence" value="ECO:0007669"/>
    <property type="project" value="UniProtKB-UniRule"/>
</dbReference>
<dbReference type="GO" id="GO:0006096">
    <property type="term" value="P:glycolytic process"/>
    <property type="evidence" value="ECO:0007669"/>
    <property type="project" value="UniProtKB-UniRule"/>
</dbReference>
<dbReference type="CDD" id="cd07067">
    <property type="entry name" value="HP_PGM_like"/>
    <property type="match status" value="1"/>
</dbReference>
<dbReference type="FunFam" id="3.40.50.1240:FF:000003">
    <property type="entry name" value="2,3-bisphosphoglycerate-dependent phosphoglycerate mutase"/>
    <property type="match status" value="1"/>
</dbReference>
<dbReference type="Gene3D" id="3.40.50.1240">
    <property type="entry name" value="Phosphoglycerate mutase-like"/>
    <property type="match status" value="1"/>
</dbReference>
<dbReference type="HAMAP" id="MF_01039">
    <property type="entry name" value="PGAM_GpmA"/>
    <property type="match status" value="1"/>
</dbReference>
<dbReference type="InterPro" id="IPR013078">
    <property type="entry name" value="His_Pase_superF_clade-1"/>
</dbReference>
<dbReference type="InterPro" id="IPR029033">
    <property type="entry name" value="His_PPase_superfam"/>
</dbReference>
<dbReference type="InterPro" id="IPR001345">
    <property type="entry name" value="PG/BPGM_mutase_AS"/>
</dbReference>
<dbReference type="InterPro" id="IPR005952">
    <property type="entry name" value="Phosphogly_mut1"/>
</dbReference>
<dbReference type="NCBIfam" id="TIGR01258">
    <property type="entry name" value="pgm_1"/>
    <property type="match status" value="1"/>
</dbReference>
<dbReference type="NCBIfam" id="NF010713">
    <property type="entry name" value="PRK14115.1"/>
    <property type="match status" value="1"/>
</dbReference>
<dbReference type="PANTHER" id="PTHR11931">
    <property type="entry name" value="PHOSPHOGLYCERATE MUTASE"/>
    <property type="match status" value="1"/>
</dbReference>
<dbReference type="Pfam" id="PF00300">
    <property type="entry name" value="His_Phos_1"/>
    <property type="match status" value="1"/>
</dbReference>
<dbReference type="PIRSF" id="PIRSF000709">
    <property type="entry name" value="6PFK_2-Ptase"/>
    <property type="match status" value="1"/>
</dbReference>
<dbReference type="SMART" id="SM00855">
    <property type="entry name" value="PGAM"/>
    <property type="match status" value="1"/>
</dbReference>
<dbReference type="SUPFAM" id="SSF53254">
    <property type="entry name" value="Phosphoglycerate mutase-like"/>
    <property type="match status" value="1"/>
</dbReference>
<dbReference type="PROSITE" id="PS00175">
    <property type="entry name" value="PG_MUTASE"/>
    <property type="match status" value="1"/>
</dbReference>
<feature type="chain" id="PRO_1000135948" description="2,3-bisphosphoglycerate-dependent phosphoglycerate mutase">
    <location>
        <begin position="1"/>
        <end position="250"/>
    </location>
</feature>
<feature type="active site" description="Tele-phosphohistidine intermediate" evidence="1">
    <location>
        <position position="11"/>
    </location>
</feature>
<feature type="active site" description="Proton donor/acceptor" evidence="1">
    <location>
        <position position="89"/>
    </location>
</feature>
<feature type="binding site" evidence="1">
    <location>
        <begin position="10"/>
        <end position="17"/>
    </location>
    <ligand>
        <name>substrate</name>
    </ligand>
</feature>
<feature type="binding site" evidence="1">
    <location>
        <begin position="23"/>
        <end position="24"/>
    </location>
    <ligand>
        <name>substrate</name>
    </ligand>
</feature>
<feature type="binding site" evidence="1">
    <location>
        <position position="62"/>
    </location>
    <ligand>
        <name>substrate</name>
    </ligand>
</feature>
<feature type="binding site" evidence="1">
    <location>
        <begin position="89"/>
        <end position="92"/>
    </location>
    <ligand>
        <name>substrate</name>
    </ligand>
</feature>
<feature type="binding site" evidence="1">
    <location>
        <position position="100"/>
    </location>
    <ligand>
        <name>substrate</name>
    </ligand>
</feature>
<feature type="binding site" evidence="1">
    <location>
        <begin position="116"/>
        <end position="117"/>
    </location>
    <ligand>
        <name>substrate</name>
    </ligand>
</feature>
<feature type="binding site" evidence="1">
    <location>
        <begin position="185"/>
        <end position="186"/>
    </location>
    <ligand>
        <name>substrate</name>
    </ligand>
</feature>
<feature type="site" description="Transition state stabilizer" evidence="1">
    <location>
        <position position="184"/>
    </location>
</feature>
<reference key="1">
    <citation type="journal article" date="2009" name="PLoS Genet.">
        <title>Organised genome dynamics in the Escherichia coli species results in highly diverse adaptive paths.</title>
        <authorList>
            <person name="Touchon M."/>
            <person name="Hoede C."/>
            <person name="Tenaillon O."/>
            <person name="Barbe V."/>
            <person name="Baeriswyl S."/>
            <person name="Bidet P."/>
            <person name="Bingen E."/>
            <person name="Bonacorsi S."/>
            <person name="Bouchier C."/>
            <person name="Bouvet O."/>
            <person name="Calteau A."/>
            <person name="Chiapello H."/>
            <person name="Clermont O."/>
            <person name="Cruveiller S."/>
            <person name="Danchin A."/>
            <person name="Diard M."/>
            <person name="Dossat C."/>
            <person name="Karoui M.E."/>
            <person name="Frapy E."/>
            <person name="Garry L."/>
            <person name="Ghigo J.M."/>
            <person name="Gilles A.M."/>
            <person name="Johnson J."/>
            <person name="Le Bouguenec C."/>
            <person name="Lescat M."/>
            <person name="Mangenot S."/>
            <person name="Martinez-Jehanne V."/>
            <person name="Matic I."/>
            <person name="Nassif X."/>
            <person name="Oztas S."/>
            <person name="Petit M.A."/>
            <person name="Pichon C."/>
            <person name="Rouy Z."/>
            <person name="Ruf C.S."/>
            <person name="Schneider D."/>
            <person name="Tourret J."/>
            <person name="Vacherie B."/>
            <person name="Vallenet D."/>
            <person name="Medigue C."/>
            <person name="Rocha E.P.C."/>
            <person name="Denamur E."/>
        </authorList>
    </citation>
    <scope>NUCLEOTIDE SEQUENCE [LARGE SCALE GENOMIC DNA]</scope>
    <source>
        <strain>UMN026 / ExPEC</strain>
    </source>
</reference>
<sequence>MAVTKLVLVRHGESQWNKENRFTGWYDVDLSEKGVSEAKAAGKLLKEEGYSFDFAYTSVLKRAIHTLWNVLDELDQAWLPVEKSWKLNERHYGALQGLNKAETAEKYGDEQVKQWRRGFAVTPPELTKDDERYPGHDPRYAKLSEKELPLTESLALTIDRVIPYWNETILPRMKSGERVIIAAHGNSLRALVKYLDNMSEEEILELNIPTGVPLVYEFDENFKPLKRYYLGNADEIAAKAAAVANQGKAK</sequence>
<accession>B7N9Z7</accession>
<gene>
    <name evidence="1" type="primary">gpmA</name>
    <name type="ordered locus">ECUMN_0839</name>
</gene>
<name>GPMA_ECOLU</name>
<proteinExistence type="inferred from homology"/>
<keyword id="KW-0312">Gluconeogenesis</keyword>
<keyword id="KW-0324">Glycolysis</keyword>
<keyword id="KW-0413">Isomerase</keyword>
<organism>
    <name type="scientific">Escherichia coli O17:K52:H18 (strain UMN026 / ExPEC)</name>
    <dbReference type="NCBI Taxonomy" id="585056"/>
    <lineage>
        <taxon>Bacteria</taxon>
        <taxon>Pseudomonadati</taxon>
        <taxon>Pseudomonadota</taxon>
        <taxon>Gammaproteobacteria</taxon>
        <taxon>Enterobacterales</taxon>
        <taxon>Enterobacteriaceae</taxon>
        <taxon>Escherichia</taxon>
    </lineage>
</organism>
<comment type="function">
    <text evidence="1">Catalyzes the interconversion of 2-phosphoglycerate and 3-phosphoglycerate.</text>
</comment>
<comment type="catalytic activity">
    <reaction evidence="1">
        <text>(2R)-2-phosphoglycerate = (2R)-3-phosphoglycerate</text>
        <dbReference type="Rhea" id="RHEA:15901"/>
        <dbReference type="ChEBI" id="CHEBI:58272"/>
        <dbReference type="ChEBI" id="CHEBI:58289"/>
        <dbReference type="EC" id="5.4.2.11"/>
    </reaction>
</comment>
<comment type="pathway">
    <text evidence="1">Carbohydrate degradation; glycolysis; pyruvate from D-glyceraldehyde 3-phosphate: step 3/5.</text>
</comment>
<comment type="subunit">
    <text evidence="1">Homodimer.</text>
</comment>
<comment type="similarity">
    <text evidence="1">Belongs to the phosphoglycerate mutase family. BPG-dependent PGAM subfamily.</text>
</comment>